<keyword id="KW-0479">Metal-binding</keyword>
<keyword id="KW-0480">Metal-thiolate cluster</keyword>
<proteinExistence type="evidence at transcript level"/>
<evidence type="ECO:0000305" key="1"/>
<accession>Q26496</accession>
<sequence>PGPDVKCVCCQDGEECPCKGGECCITGTCCKEGDGLCCGKCSNAACKCADGCKCGSGCSCTLGNCTC</sequence>
<reference key="1">
    <citation type="journal article" date="1997" name="Cell. Mol. Life Sci.">
        <title>PCR amplification and cloning of metallothionein complementary DNAs in temperate and Antarctic sea urchin characterized by a large difference in egg metallothionein content.</title>
        <authorList>
            <person name="Scudiero R."/>
            <person name="Capasso C."/>
            <person name="Carginale V."/>
            <person name="Riggio M."/>
            <person name="Capasso A."/>
            <person name="Ciaramella M."/>
            <person name="Filosa S."/>
            <person name="Parisi E."/>
        </authorList>
    </citation>
    <scope>NUCLEOTIDE SEQUENCE [MRNA]</scope>
    <source>
        <tissue>Egg</tissue>
    </source>
</reference>
<organism>
    <name type="scientific">Sphaerechinus granularis</name>
    <name type="common">Purple sea urchin</name>
    <dbReference type="NCBI Taxonomy" id="39374"/>
    <lineage>
        <taxon>Eukaryota</taxon>
        <taxon>Metazoa</taxon>
        <taxon>Echinodermata</taxon>
        <taxon>Eleutherozoa</taxon>
        <taxon>Echinozoa</taxon>
        <taxon>Echinoidea</taxon>
        <taxon>Euechinoidea</taxon>
        <taxon>Echinacea</taxon>
        <taxon>Temnopleuroida</taxon>
        <taxon>Toxopneustidae</taxon>
        <taxon>Sphaerechinus</taxon>
    </lineage>
</organism>
<name>MTB_SPHGR</name>
<protein>
    <recommendedName>
        <fullName>Metallothionein-B</fullName>
        <shortName>MTB</shortName>
    </recommendedName>
</protein>
<dbReference type="EMBL" id="Z67877">
    <property type="protein sequence ID" value="CAA91784.1"/>
    <property type="molecule type" value="mRNA"/>
</dbReference>
<dbReference type="SMR" id="Q26496"/>
<dbReference type="GO" id="GO:0046872">
    <property type="term" value="F:metal ion binding"/>
    <property type="evidence" value="ECO:0007669"/>
    <property type="project" value="UniProtKB-KW"/>
</dbReference>
<dbReference type="InterPro" id="IPR017980">
    <property type="entry name" value="Metalthion_4_echinoid/annelid"/>
</dbReference>
<dbReference type="InterPro" id="IPR001396">
    <property type="entry name" value="Metalthion_4_echinoidea"/>
</dbReference>
<dbReference type="InterPro" id="IPR017854">
    <property type="entry name" value="Metalthion_dom_sf"/>
</dbReference>
<dbReference type="Pfam" id="PF05522">
    <property type="entry name" value="Metallothio_6"/>
    <property type="match status" value="1"/>
</dbReference>
<dbReference type="PRINTS" id="PR00873">
    <property type="entry name" value="MTECHINOIDEA"/>
</dbReference>
<dbReference type="SUPFAM" id="SSF57868">
    <property type="entry name" value="Metallothionein"/>
    <property type="match status" value="2"/>
</dbReference>
<comment type="function">
    <text>Metallothioneins have a high content of cysteine residues that bind various heavy metals.</text>
</comment>
<comment type="similarity">
    <text evidence="1">Belongs to the metallothionein superfamily. Type 4 family.</text>
</comment>
<feature type="chain" id="PRO_0000197350" description="Metallothionein-B">
    <location>
        <begin position="1" status="less than"/>
        <end position="67"/>
    </location>
</feature>
<feature type="non-terminal residue">
    <location>
        <position position="1"/>
    </location>
</feature>